<dbReference type="EC" id="4.2.3.4" evidence="1"/>
<dbReference type="EMBL" id="AP011115">
    <property type="protein sequence ID" value="BAH55170.1"/>
    <property type="molecule type" value="Genomic_DNA"/>
</dbReference>
<dbReference type="RefSeq" id="WP_015890600.1">
    <property type="nucleotide sequence ID" value="NC_012522.1"/>
</dbReference>
<dbReference type="SMR" id="C1B4I1"/>
<dbReference type="STRING" id="632772.ROP_69230"/>
<dbReference type="KEGG" id="rop:ROP_69230"/>
<dbReference type="PATRIC" id="fig|632772.20.peg.7214"/>
<dbReference type="HOGENOM" id="CLU_001201_0_3_11"/>
<dbReference type="OrthoDB" id="9806583at2"/>
<dbReference type="UniPathway" id="UPA00053">
    <property type="reaction ID" value="UER00085"/>
</dbReference>
<dbReference type="Proteomes" id="UP000002212">
    <property type="component" value="Chromosome"/>
</dbReference>
<dbReference type="GO" id="GO:0005737">
    <property type="term" value="C:cytoplasm"/>
    <property type="evidence" value="ECO:0007669"/>
    <property type="project" value="UniProtKB-SubCell"/>
</dbReference>
<dbReference type="GO" id="GO:0003856">
    <property type="term" value="F:3-dehydroquinate synthase activity"/>
    <property type="evidence" value="ECO:0007669"/>
    <property type="project" value="UniProtKB-UniRule"/>
</dbReference>
<dbReference type="GO" id="GO:0046872">
    <property type="term" value="F:metal ion binding"/>
    <property type="evidence" value="ECO:0007669"/>
    <property type="project" value="UniProtKB-KW"/>
</dbReference>
<dbReference type="GO" id="GO:0000166">
    <property type="term" value="F:nucleotide binding"/>
    <property type="evidence" value="ECO:0007669"/>
    <property type="project" value="UniProtKB-KW"/>
</dbReference>
<dbReference type="GO" id="GO:0008652">
    <property type="term" value="P:amino acid biosynthetic process"/>
    <property type="evidence" value="ECO:0007669"/>
    <property type="project" value="UniProtKB-KW"/>
</dbReference>
<dbReference type="GO" id="GO:0009073">
    <property type="term" value="P:aromatic amino acid family biosynthetic process"/>
    <property type="evidence" value="ECO:0007669"/>
    <property type="project" value="UniProtKB-KW"/>
</dbReference>
<dbReference type="GO" id="GO:0009423">
    <property type="term" value="P:chorismate biosynthetic process"/>
    <property type="evidence" value="ECO:0007669"/>
    <property type="project" value="UniProtKB-UniRule"/>
</dbReference>
<dbReference type="CDD" id="cd08195">
    <property type="entry name" value="DHQS"/>
    <property type="match status" value="1"/>
</dbReference>
<dbReference type="FunFam" id="3.40.50.1970:FF:000012">
    <property type="entry name" value="3-dehydroquinate synthase"/>
    <property type="match status" value="1"/>
</dbReference>
<dbReference type="Gene3D" id="3.40.50.1970">
    <property type="match status" value="1"/>
</dbReference>
<dbReference type="Gene3D" id="1.20.1090.10">
    <property type="entry name" value="Dehydroquinate synthase-like - alpha domain"/>
    <property type="match status" value="1"/>
</dbReference>
<dbReference type="HAMAP" id="MF_00110">
    <property type="entry name" value="DHQ_synthase"/>
    <property type="match status" value="1"/>
</dbReference>
<dbReference type="InterPro" id="IPR050071">
    <property type="entry name" value="Dehydroquinate_synthase"/>
</dbReference>
<dbReference type="InterPro" id="IPR016037">
    <property type="entry name" value="DHQ_synth_AroB"/>
</dbReference>
<dbReference type="InterPro" id="IPR030963">
    <property type="entry name" value="DHQ_synth_fam"/>
</dbReference>
<dbReference type="InterPro" id="IPR030960">
    <property type="entry name" value="DHQS/DOIS_N"/>
</dbReference>
<dbReference type="InterPro" id="IPR056179">
    <property type="entry name" value="DHQS_C"/>
</dbReference>
<dbReference type="NCBIfam" id="TIGR01357">
    <property type="entry name" value="aroB"/>
    <property type="match status" value="1"/>
</dbReference>
<dbReference type="PANTHER" id="PTHR43622">
    <property type="entry name" value="3-DEHYDROQUINATE SYNTHASE"/>
    <property type="match status" value="1"/>
</dbReference>
<dbReference type="PANTHER" id="PTHR43622:SF7">
    <property type="entry name" value="3-DEHYDROQUINATE SYNTHASE, CHLOROPLASTIC"/>
    <property type="match status" value="1"/>
</dbReference>
<dbReference type="Pfam" id="PF01761">
    <property type="entry name" value="DHQ_synthase"/>
    <property type="match status" value="1"/>
</dbReference>
<dbReference type="Pfam" id="PF24621">
    <property type="entry name" value="DHQS_C"/>
    <property type="match status" value="1"/>
</dbReference>
<dbReference type="PIRSF" id="PIRSF001455">
    <property type="entry name" value="DHQ_synth"/>
    <property type="match status" value="1"/>
</dbReference>
<dbReference type="SUPFAM" id="SSF56796">
    <property type="entry name" value="Dehydroquinate synthase-like"/>
    <property type="match status" value="1"/>
</dbReference>
<sequence length="370" mass="39133">MTEPVRVQVQTANPYPVIIGRGLLGELVDELTGTRTVAIFHQPPLAETAEAVRAALAEKGIDAHRIEIPDAEDGKDLAVAGFCWEVLGRIGLTRSDAVVSLGGGAATDLAGFVAATWMRGVRVIHVPTTLLAMVDAAVGGKTGINTEAGKNLVGSFHEPSAVLIDLATLETVPRNEIVAGMAEVVKTGFIADPVILELIEKDPEAALDPTGTVLPELIRRSVEVKAKVVAADLRESDLREILNYGHTLGHAIERRERYRWRHGAAVAVGLVFAAELGRLAGRLDDATADRHRTILELVGLPTTYDADAFGQLVEGMQTDKKNRAGVLRFVVLDGLAKPGRLEGPDPSLLVAAYSAVAREGTPGTGGAVLL</sequence>
<accession>C1B4I1</accession>
<feature type="chain" id="PRO_1000119086" description="3-dehydroquinate synthase">
    <location>
        <begin position="1"/>
        <end position="370"/>
    </location>
</feature>
<feature type="binding site" evidence="1">
    <location>
        <begin position="70"/>
        <end position="75"/>
    </location>
    <ligand>
        <name>NAD(+)</name>
        <dbReference type="ChEBI" id="CHEBI:57540"/>
    </ligand>
</feature>
<feature type="binding site" evidence="1">
    <location>
        <begin position="104"/>
        <end position="108"/>
    </location>
    <ligand>
        <name>NAD(+)</name>
        <dbReference type="ChEBI" id="CHEBI:57540"/>
    </ligand>
</feature>
<feature type="binding site" evidence="1">
    <location>
        <begin position="128"/>
        <end position="129"/>
    </location>
    <ligand>
        <name>NAD(+)</name>
        <dbReference type="ChEBI" id="CHEBI:57540"/>
    </ligand>
</feature>
<feature type="binding site" evidence="1">
    <location>
        <position position="141"/>
    </location>
    <ligand>
        <name>NAD(+)</name>
        <dbReference type="ChEBI" id="CHEBI:57540"/>
    </ligand>
</feature>
<feature type="binding site" evidence="1">
    <location>
        <position position="150"/>
    </location>
    <ligand>
        <name>NAD(+)</name>
        <dbReference type="ChEBI" id="CHEBI:57540"/>
    </ligand>
</feature>
<feature type="binding site" evidence="1">
    <location>
        <begin position="168"/>
        <end position="171"/>
    </location>
    <ligand>
        <name>NAD(+)</name>
        <dbReference type="ChEBI" id="CHEBI:57540"/>
    </ligand>
</feature>
<feature type="binding site" evidence="1">
    <location>
        <position position="183"/>
    </location>
    <ligand>
        <name>Zn(2+)</name>
        <dbReference type="ChEBI" id="CHEBI:29105"/>
    </ligand>
</feature>
<feature type="binding site" evidence="1">
    <location>
        <position position="246"/>
    </location>
    <ligand>
        <name>Zn(2+)</name>
        <dbReference type="ChEBI" id="CHEBI:29105"/>
    </ligand>
</feature>
<feature type="binding site" evidence="1">
    <location>
        <position position="262"/>
    </location>
    <ligand>
        <name>Zn(2+)</name>
        <dbReference type="ChEBI" id="CHEBI:29105"/>
    </ligand>
</feature>
<comment type="function">
    <text evidence="1">Catalyzes the conversion of 3-deoxy-D-arabino-heptulosonate 7-phosphate (DAHP) to dehydroquinate (DHQ).</text>
</comment>
<comment type="catalytic activity">
    <reaction evidence="1">
        <text>7-phospho-2-dehydro-3-deoxy-D-arabino-heptonate = 3-dehydroquinate + phosphate</text>
        <dbReference type="Rhea" id="RHEA:21968"/>
        <dbReference type="ChEBI" id="CHEBI:32364"/>
        <dbReference type="ChEBI" id="CHEBI:43474"/>
        <dbReference type="ChEBI" id="CHEBI:58394"/>
        <dbReference type="EC" id="4.2.3.4"/>
    </reaction>
</comment>
<comment type="cofactor">
    <cofactor evidence="1">
        <name>Co(2+)</name>
        <dbReference type="ChEBI" id="CHEBI:48828"/>
    </cofactor>
    <cofactor evidence="1">
        <name>Zn(2+)</name>
        <dbReference type="ChEBI" id="CHEBI:29105"/>
    </cofactor>
    <text evidence="1">Binds 1 divalent metal cation per subunit. Can use either Co(2+) or Zn(2+).</text>
</comment>
<comment type="cofactor">
    <cofactor evidence="1">
        <name>NAD(+)</name>
        <dbReference type="ChEBI" id="CHEBI:57540"/>
    </cofactor>
</comment>
<comment type="pathway">
    <text evidence="1">Metabolic intermediate biosynthesis; chorismate biosynthesis; chorismate from D-erythrose 4-phosphate and phosphoenolpyruvate: step 2/7.</text>
</comment>
<comment type="subcellular location">
    <subcellularLocation>
        <location evidence="1">Cytoplasm</location>
    </subcellularLocation>
</comment>
<comment type="similarity">
    <text evidence="1">Belongs to the sugar phosphate cyclases superfamily. Dehydroquinate synthase family.</text>
</comment>
<name>AROB_RHOOB</name>
<keyword id="KW-0028">Amino-acid biosynthesis</keyword>
<keyword id="KW-0057">Aromatic amino acid biosynthesis</keyword>
<keyword id="KW-0170">Cobalt</keyword>
<keyword id="KW-0963">Cytoplasm</keyword>
<keyword id="KW-0456">Lyase</keyword>
<keyword id="KW-0479">Metal-binding</keyword>
<keyword id="KW-0520">NAD</keyword>
<keyword id="KW-0547">Nucleotide-binding</keyword>
<keyword id="KW-0862">Zinc</keyword>
<organism>
    <name type="scientific">Rhodococcus opacus (strain B4)</name>
    <dbReference type="NCBI Taxonomy" id="632772"/>
    <lineage>
        <taxon>Bacteria</taxon>
        <taxon>Bacillati</taxon>
        <taxon>Actinomycetota</taxon>
        <taxon>Actinomycetes</taxon>
        <taxon>Mycobacteriales</taxon>
        <taxon>Nocardiaceae</taxon>
        <taxon>Rhodococcus</taxon>
    </lineage>
</organism>
<evidence type="ECO:0000255" key="1">
    <source>
        <dbReference type="HAMAP-Rule" id="MF_00110"/>
    </source>
</evidence>
<gene>
    <name evidence="1" type="primary">aroB</name>
    <name type="ordered locus">ROP_69230</name>
</gene>
<reference key="1">
    <citation type="submission" date="2009-03" db="EMBL/GenBank/DDBJ databases">
        <title>Comparison of the complete genome sequences of Rhodococcus erythropolis PR4 and Rhodococcus opacus B4.</title>
        <authorList>
            <person name="Takarada H."/>
            <person name="Sekine M."/>
            <person name="Hosoyama A."/>
            <person name="Yamada R."/>
            <person name="Fujisawa T."/>
            <person name="Omata S."/>
            <person name="Shimizu A."/>
            <person name="Tsukatani N."/>
            <person name="Tanikawa S."/>
            <person name="Fujita N."/>
            <person name="Harayama S."/>
        </authorList>
    </citation>
    <scope>NUCLEOTIDE SEQUENCE [LARGE SCALE GENOMIC DNA]</scope>
    <source>
        <strain>B4</strain>
    </source>
</reference>
<proteinExistence type="inferred from homology"/>
<protein>
    <recommendedName>
        <fullName evidence="1">3-dehydroquinate synthase</fullName>
        <shortName evidence="1">DHQS</shortName>
        <ecNumber evidence="1">4.2.3.4</ecNumber>
    </recommendedName>
</protein>